<dbReference type="EC" id="7.4.2.8" evidence="1"/>
<dbReference type="EMBL" id="AP011115">
    <property type="protein sequence ID" value="BAH54637.1"/>
    <property type="molecule type" value="Genomic_DNA"/>
</dbReference>
<dbReference type="RefSeq" id="WP_015890092.1">
    <property type="nucleotide sequence ID" value="NC_012522.1"/>
</dbReference>
<dbReference type="SMR" id="C1B1E2"/>
<dbReference type="STRING" id="632772.ROP_63900"/>
<dbReference type="KEGG" id="rop:ROP_63900"/>
<dbReference type="PATRIC" id="fig|632772.20.peg.6672"/>
<dbReference type="HOGENOM" id="CLU_005314_3_0_11"/>
<dbReference type="OrthoDB" id="9805579at2"/>
<dbReference type="Proteomes" id="UP000002212">
    <property type="component" value="Chromosome"/>
</dbReference>
<dbReference type="GO" id="GO:0031522">
    <property type="term" value="C:cell envelope Sec protein transport complex"/>
    <property type="evidence" value="ECO:0007669"/>
    <property type="project" value="TreeGrafter"/>
</dbReference>
<dbReference type="GO" id="GO:0005829">
    <property type="term" value="C:cytosol"/>
    <property type="evidence" value="ECO:0007669"/>
    <property type="project" value="TreeGrafter"/>
</dbReference>
<dbReference type="GO" id="GO:0005886">
    <property type="term" value="C:plasma membrane"/>
    <property type="evidence" value="ECO:0007669"/>
    <property type="project" value="UniProtKB-SubCell"/>
</dbReference>
<dbReference type="GO" id="GO:0005524">
    <property type="term" value="F:ATP binding"/>
    <property type="evidence" value="ECO:0007669"/>
    <property type="project" value="UniProtKB-UniRule"/>
</dbReference>
<dbReference type="GO" id="GO:0008564">
    <property type="term" value="F:protein-exporting ATPase activity"/>
    <property type="evidence" value="ECO:0007669"/>
    <property type="project" value="UniProtKB-EC"/>
</dbReference>
<dbReference type="GO" id="GO:0065002">
    <property type="term" value="P:intracellular protein transmembrane transport"/>
    <property type="evidence" value="ECO:0007669"/>
    <property type="project" value="UniProtKB-UniRule"/>
</dbReference>
<dbReference type="GO" id="GO:0017038">
    <property type="term" value="P:protein import"/>
    <property type="evidence" value="ECO:0007669"/>
    <property type="project" value="InterPro"/>
</dbReference>
<dbReference type="GO" id="GO:0006605">
    <property type="term" value="P:protein targeting"/>
    <property type="evidence" value="ECO:0007669"/>
    <property type="project" value="UniProtKB-UniRule"/>
</dbReference>
<dbReference type="GO" id="GO:0043952">
    <property type="term" value="P:protein transport by the Sec complex"/>
    <property type="evidence" value="ECO:0007669"/>
    <property type="project" value="TreeGrafter"/>
</dbReference>
<dbReference type="CDD" id="cd17928">
    <property type="entry name" value="DEXDc_SecA"/>
    <property type="match status" value="1"/>
</dbReference>
<dbReference type="CDD" id="cd18803">
    <property type="entry name" value="SF2_C_secA"/>
    <property type="match status" value="1"/>
</dbReference>
<dbReference type="FunFam" id="1.10.3060.10:FF:000002">
    <property type="entry name" value="Preprotein translocase subunit SecA"/>
    <property type="match status" value="1"/>
</dbReference>
<dbReference type="FunFam" id="3.40.50.300:FF:000113">
    <property type="entry name" value="Preprotein translocase subunit SecA"/>
    <property type="match status" value="1"/>
</dbReference>
<dbReference type="FunFam" id="3.40.50.300:FF:000334">
    <property type="entry name" value="Protein translocase subunit SecA"/>
    <property type="match status" value="1"/>
</dbReference>
<dbReference type="FunFam" id="3.90.1440.10:FF:000002">
    <property type="entry name" value="Protein translocase subunit SecA"/>
    <property type="match status" value="1"/>
</dbReference>
<dbReference type="Gene3D" id="1.10.3060.10">
    <property type="entry name" value="Helical scaffold and wing domains of SecA"/>
    <property type="match status" value="1"/>
</dbReference>
<dbReference type="Gene3D" id="3.40.50.300">
    <property type="entry name" value="P-loop containing nucleotide triphosphate hydrolases"/>
    <property type="match status" value="2"/>
</dbReference>
<dbReference type="Gene3D" id="3.90.1440.10">
    <property type="entry name" value="SecA, preprotein cross-linking domain"/>
    <property type="match status" value="1"/>
</dbReference>
<dbReference type="HAMAP" id="MF_01382">
    <property type="entry name" value="SecA"/>
    <property type="match status" value="1"/>
</dbReference>
<dbReference type="InterPro" id="IPR014001">
    <property type="entry name" value="Helicase_ATP-bd"/>
</dbReference>
<dbReference type="InterPro" id="IPR001650">
    <property type="entry name" value="Helicase_C-like"/>
</dbReference>
<dbReference type="InterPro" id="IPR027417">
    <property type="entry name" value="P-loop_NTPase"/>
</dbReference>
<dbReference type="InterPro" id="IPR000185">
    <property type="entry name" value="SecA"/>
</dbReference>
<dbReference type="InterPro" id="IPR011115">
    <property type="entry name" value="SecA_DEAD"/>
</dbReference>
<dbReference type="InterPro" id="IPR014018">
    <property type="entry name" value="SecA_motor_DEAD"/>
</dbReference>
<dbReference type="InterPro" id="IPR011130">
    <property type="entry name" value="SecA_preprotein_X-link_dom"/>
</dbReference>
<dbReference type="InterPro" id="IPR044722">
    <property type="entry name" value="SecA_SF2_C"/>
</dbReference>
<dbReference type="InterPro" id="IPR011116">
    <property type="entry name" value="SecA_Wing/Scaffold"/>
</dbReference>
<dbReference type="InterPro" id="IPR036266">
    <property type="entry name" value="SecA_Wing/Scaffold_sf"/>
</dbReference>
<dbReference type="InterPro" id="IPR036670">
    <property type="entry name" value="SecA_X-link_sf"/>
</dbReference>
<dbReference type="NCBIfam" id="NF009538">
    <property type="entry name" value="PRK12904.1"/>
    <property type="match status" value="1"/>
</dbReference>
<dbReference type="NCBIfam" id="TIGR00963">
    <property type="entry name" value="secA"/>
    <property type="match status" value="1"/>
</dbReference>
<dbReference type="PANTHER" id="PTHR30612:SF0">
    <property type="entry name" value="CHLOROPLAST PROTEIN-TRANSPORTING ATPASE"/>
    <property type="match status" value="1"/>
</dbReference>
<dbReference type="PANTHER" id="PTHR30612">
    <property type="entry name" value="SECA INNER MEMBRANE COMPONENT OF SEC PROTEIN SECRETION SYSTEM"/>
    <property type="match status" value="1"/>
</dbReference>
<dbReference type="Pfam" id="PF21090">
    <property type="entry name" value="P-loop_SecA"/>
    <property type="match status" value="1"/>
</dbReference>
<dbReference type="Pfam" id="PF07517">
    <property type="entry name" value="SecA_DEAD"/>
    <property type="match status" value="1"/>
</dbReference>
<dbReference type="Pfam" id="PF01043">
    <property type="entry name" value="SecA_PP_bind"/>
    <property type="match status" value="1"/>
</dbReference>
<dbReference type="Pfam" id="PF07516">
    <property type="entry name" value="SecA_SW"/>
    <property type="match status" value="1"/>
</dbReference>
<dbReference type="PRINTS" id="PR00906">
    <property type="entry name" value="SECA"/>
</dbReference>
<dbReference type="SMART" id="SM00957">
    <property type="entry name" value="SecA_DEAD"/>
    <property type="match status" value="1"/>
</dbReference>
<dbReference type="SMART" id="SM00958">
    <property type="entry name" value="SecA_PP_bind"/>
    <property type="match status" value="1"/>
</dbReference>
<dbReference type="SUPFAM" id="SSF81886">
    <property type="entry name" value="Helical scaffold and wing domains of SecA"/>
    <property type="match status" value="1"/>
</dbReference>
<dbReference type="SUPFAM" id="SSF52540">
    <property type="entry name" value="P-loop containing nucleoside triphosphate hydrolases"/>
    <property type="match status" value="2"/>
</dbReference>
<dbReference type="SUPFAM" id="SSF81767">
    <property type="entry name" value="Pre-protein crosslinking domain of SecA"/>
    <property type="match status" value="1"/>
</dbReference>
<dbReference type="PROSITE" id="PS51196">
    <property type="entry name" value="SECA_MOTOR_DEAD"/>
    <property type="match status" value="1"/>
</dbReference>
<comment type="function">
    <text evidence="1">Part of the Sec protein translocase complex. Interacts with the SecYEG preprotein conducting channel. Has a central role in coupling the hydrolysis of ATP to the transfer of proteins into and across the cell membrane, serving as an ATP-driven molecular motor driving the stepwise translocation of polypeptide chains across the membrane.</text>
</comment>
<comment type="catalytic activity">
    <reaction evidence="1">
        <text>ATP + H2O + cellular proteinSide 1 = ADP + phosphate + cellular proteinSide 2.</text>
        <dbReference type="EC" id="7.4.2.8"/>
    </reaction>
</comment>
<comment type="subunit">
    <text evidence="1">Monomer and homodimer. Part of the essential Sec protein translocation apparatus which comprises SecA, SecYEG and auxiliary proteins SecDF. Other proteins may also be involved.</text>
</comment>
<comment type="subcellular location">
    <subcellularLocation>
        <location evidence="1">Cell membrane</location>
        <topology evidence="1">Peripheral membrane protein</topology>
        <orientation evidence="1">Cytoplasmic side</orientation>
    </subcellularLocation>
    <subcellularLocation>
        <location evidence="1">Cytoplasm</location>
    </subcellularLocation>
    <text evidence="1">Distribution is 50-50.</text>
</comment>
<comment type="similarity">
    <text evidence="1">Belongs to the SecA family.</text>
</comment>
<feature type="chain" id="PRO_1000184242" description="Protein translocase subunit SecA">
    <location>
        <begin position="1"/>
        <end position="955"/>
    </location>
</feature>
<feature type="region of interest" description="Disordered" evidence="2">
    <location>
        <begin position="861"/>
        <end position="955"/>
    </location>
</feature>
<feature type="compositionally biased region" description="Low complexity" evidence="2">
    <location>
        <begin position="874"/>
        <end position="888"/>
    </location>
</feature>
<feature type="compositionally biased region" description="Basic residues" evidence="2">
    <location>
        <begin position="943"/>
        <end position="955"/>
    </location>
</feature>
<feature type="binding site" evidence="1">
    <location>
        <position position="87"/>
    </location>
    <ligand>
        <name>ATP</name>
        <dbReference type="ChEBI" id="CHEBI:30616"/>
    </ligand>
</feature>
<feature type="binding site" evidence="1">
    <location>
        <begin position="105"/>
        <end position="109"/>
    </location>
    <ligand>
        <name>ATP</name>
        <dbReference type="ChEBI" id="CHEBI:30616"/>
    </ligand>
</feature>
<feature type="binding site" evidence="1">
    <location>
        <position position="494"/>
    </location>
    <ligand>
        <name>ATP</name>
        <dbReference type="ChEBI" id="CHEBI:30616"/>
    </ligand>
</feature>
<proteinExistence type="inferred from homology"/>
<gene>
    <name evidence="1" type="primary">secA</name>
    <name type="ordered locus">ROP_63900</name>
</gene>
<sequence length="955" mass="105967">MPSLSLSKLLRVGEGRMVKRLKHIADHVSSLSPEVEDLTDEQLRAKTEEFRARYRDGETLDELLPEAFAVAREASWRVIDQRHFHVQIMGGAALHFGNIAEMKTGEGKTLTCVLPAYLNAIAGDGVHVVTVNDYLAKRDSEWMGRVHRFLGLDTSVILSGMSPAERRAAYAADITYGTNNEFGFDYLRDNMTHSLDDLVQRGHNFAVVDEVDSILIDEARTPLIISGPADASSKWYAEFARIAPLLKRDVHYEVDIRKRTIGVHEAGVELVEDQLGIDNLYEAANSPLVSYLNNAIKAKELYTKDKDYIVRDGEVIIVDEFTGRVLVGRRYNEGMHQAIEAKEKVEIKAENQTLATITLQNYFRLYDKLSGMTGTAETEAAELHQIYNLGVIPIPTNRPMVRVDNGDLIYKTEEAKFHAVVDDVVERHEKGQPVLIGTTSVERSEYLSKQFTKRGVAHNVLNAKFHEQEAQIIAEAGRSGAVTVATNMAGRGTDVVLGGNPDIIADIALRKQGLDPVHTPDDYEAAWDDVLDQVKAEVKADADKVREAGGLYVLGTERHESRRIDNQLRGRSGRQGDPGESRFYLSLGDELMRRFNGAALESIMTRLNLPDDVPIEAKMVSKAIKSAQTQVEQQNFEIRKNVLKYDEVMNQQRTVIYNERRQILEGKDMEGQVEKMITDVVTAYVDGATAEGYVEDWDLEQLWTALKTLYPIGVDYKELVGDGDDETKDITAEELRETLLKDAHDAYARREAEIDGVAGEGSMRELERRVLLSVLDRKWREHLYEMDYLKEGIGLRAMAQRDPLVEYQREGFDMFGGMLEGLKEESVGFLFNLQVEAAAPQAAQAPGVSVTAASAAATASAAPAPAAPRPLPTQEAAQQAQGTAAPSALRAKGLDDGEPRGLTYSGPAEDGNAQLSRRGAAESDDSADAGTRRQRREAARSQSKGKKAPRTKRKR</sequence>
<name>SECA_RHOOB</name>
<reference key="1">
    <citation type="submission" date="2009-03" db="EMBL/GenBank/DDBJ databases">
        <title>Comparison of the complete genome sequences of Rhodococcus erythropolis PR4 and Rhodococcus opacus B4.</title>
        <authorList>
            <person name="Takarada H."/>
            <person name="Sekine M."/>
            <person name="Hosoyama A."/>
            <person name="Yamada R."/>
            <person name="Fujisawa T."/>
            <person name="Omata S."/>
            <person name="Shimizu A."/>
            <person name="Tsukatani N."/>
            <person name="Tanikawa S."/>
            <person name="Fujita N."/>
            <person name="Harayama S."/>
        </authorList>
    </citation>
    <scope>NUCLEOTIDE SEQUENCE [LARGE SCALE GENOMIC DNA]</scope>
    <source>
        <strain>B4</strain>
    </source>
</reference>
<evidence type="ECO:0000255" key="1">
    <source>
        <dbReference type="HAMAP-Rule" id="MF_01382"/>
    </source>
</evidence>
<evidence type="ECO:0000256" key="2">
    <source>
        <dbReference type="SAM" id="MobiDB-lite"/>
    </source>
</evidence>
<keyword id="KW-0067">ATP-binding</keyword>
<keyword id="KW-1003">Cell membrane</keyword>
<keyword id="KW-0963">Cytoplasm</keyword>
<keyword id="KW-0472">Membrane</keyword>
<keyword id="KW-0547">Nucleotide-binding</keyword>
<keyword id="KW-0653">Protein transport</keyword>
<keyword id="KW-1278">Translocase</keyword>
<keyword id="KW-0811">Translocation</keyword>
<keyword id="KW-0813">Transport</keyword>
<organism>
    <name type="scientific">Rhodococcus opacus (strain B4)</name>
    <dbReference type="NCBI Taxonomy" id="632772"/>
    <lineage>
        <taxon>Bacteria</taxon>
        <taxon>Bacillati</taxon>
        <taxon>Actinomycetota</taxon>
        <taxon>Actinomycetes</taxon>
        <taxon>Mycobacteriales</taxon>
        <taxon>Nocardiaceae</taxon>
        <taxon>Rhodococcus</taxon>
    </lineage>
</organism>
<protein>
    <recommendedName>
        <fullName evidence="1">Protein translocase subunit SecA</fullName>
        <ecNumber evidence="1">7.4.2.8</ecNumber>
    </recommendedName>
</protein>
<accession>C1B1E2</accession>